<proteinExistence type="evidence at transcript level"/>
<organism>
    <name type="scientific">Bos taurus</name>
    <name type="common">Bovine</name>
    <dbReference type="NCBI Taxonomy" id="9913"/>
    <lineage>
        <taxon>Eukaryota</taxon>
        <taxon>Metazoa</taxon>
        <taxon>Chordata</taxon>
        <taxon>Craniata</taxon>
        <taxon>Vertebrata</taxon>
        <taxon>Euteleostomi</taxon>
        <taxon>Mammalia</taxon>
        <taxon>Eutheria</taxon>
        <taxon>Laurasiatheria</taxon>
        <taxon>Artiodactyla</taxon>
        <taxon>Ruminantia</taxon>
        <taxon>Pecora</taxon>
        <taxon>Bovidae</taxon>
        <taxon>Bovinae</taxon>
        <taxon>Bos</taxon>
    </lineage>
</organism>
<dbReference type="EC" id="3.-.-.-"/>
<dbReference type="EMBL" id="BC118251">
    <property type="protein sequence ID" value="AAI18252.1"/>
    <property type="molecule type" value="mRNA"/>
</dbReference>
<dbReference type="RefSeq" id="NP_001071591.1">
    <property type="nucleotide sequence ID" value="NM_001078123.1"/>
</dbReference>
<dbReference type="SMR" id="Q17QP1"/>
<dbReference type="FunCoup" id="Q17QP1">
    <property type="interactions" value="770"/>
</dbReference>
<dbReference type="STRING" id="9913.ENSBTAP00000036358"/>
<dbReference type="ESTHER" id="bovin-abhd8">
    <property type="family name" value="ABHD8"/>
</dbReference>
<dbReference type="PaxDb" id="9913-ENSBTAP00000036358"/>
<dbReference type="Ensembl" id="ENSBTAT00000036501.6">
    <property type="protein sequence ID" value="ENSBTAP00000036358.4"/>
    <property type="gene ID" value="ENSBTAG00000025809.6"/>
</dbReference>
<dbReference type="GeneID" id="768306"/>
<dbReference type="KEGG" id="bta:768306"/>
<dbReference type="CTD" id="79575"/>
<dbReference type="VEuPathDB" id="HostDB:ENSBTAG00000025809"/>
<dbReference type="VGNC" id="VGNC:25504">
    <property type="gene designation" value="ABHD8"/>
</dbReference>
<dbReference type="eggNOG" id="KOG2382">
    <property type="taxonomic scope" value="Eukaryota"/>
</dbReference>
<dbReference type="GeneTree" id="ENSGT00390000007336"/>
<dbReference type="HOGENOM" id="CLU_057347_0_0_1"/>
<dbReference type="InParanoid" id="Q17QP1"/>
<dbReference type="OMA" id="VHCQRRI"/>
<dbReference type="OrthoDB" id="428974at2759"/>
<dbReference type="TreeFam" id="TF331708"/>
<dbReference type="Proteomes" id="UP000009136">
    <property type="component" value="Chromosome 7"/>
</dbReference>
<dbReference type="Bgee" id="ENSBTAG00000025809">
    <property type="expression patterns" value="Expressed in retina and 104 other cell types or tissues"/>
</dbReference>
<dbReference type="GO" id="GO:0005737">
    <property type="term" value="C:cytoplasm"/>
    <property type="evidence" value="ECO:0000250"/>
    <property type="project" value="UniProtKB"/>
</dbReference>
<dbReference type="GO" id="GO:0005739">
    <property type="term" value="C:mitochondrion"/>
    <property type="evidence" value="ECO:0000318"/>
    <property type="project" value="GO_Central"/>
</dbReference>
<dbReference type="GO" id="GO:0052689">
    <property type="term" value="F:carboxylic ester hydrolase activity"/>
    <property type="evidence" value="ECO:0000318"/>
    <property type="project" value="GO_Central"/>
</dbReference>
<dbReference type="GO" id="GO:0042171">
    <property type="term" value="F:lysophosphatidic acid acyltransferase activity"/>
    <property type="evidence" value="ECO:0000318"/>
    <property type="project" value="GO_Central"/>
</dbReference>
<dbReference type="GO" id="GO:0055088">
    <property type="term" value="P:lipid homeostasis"/>
    <property type="evidence" value="ECO:0000318"/>
    <property type="project" value="GO_Central"/>
</dbReference>
<dbReference type="GO" id="GO:1900226">
    <property type="term" value="P:negative regulation of NLRP3 inflammasome complex assembly"/>
    <property type="evidence" value="ECO:0000250"/>
    <property type="project" value="UniProtKB"/>
</dbReference>
<dbReference type="GO" id="GO:0006654">
    <property type="term" value="P:phosphatidic acid biosynthetic process"/>
    <property type="evidence" value="ECO:0000318"/>
    <property type="project" value="GO_Central"/>
</dbReference>
<dbReference type="FunFam" id="3.40.50.1820:FF:000017">
    <property type="entry name" value="Abhydrolase domain containing 8"/>
    <property type="match status" value="1"/>
</dbReference>
<dbReference type="Gene3D" id="3.40.50.1820">
    <property type="entry name" value="alpha/beta hydrolase"/>
    <property type="match status" value="1"/>
</dbReference>
<dbReference type="InterPro" id="IPR000073">
    <property type="entry name" value="AB_hydrolase_1"/>
</dbReference>
<dbReference type="InterPro" id="IPR029058">
    <property type="entry name" value="AB_hydrolase_fold"/>
</dbReference>
<dbReference type="InterPro" id="IPR000639">
    <property type="entry name" value="Epox_hydrolase-like"/>
</dbReference>
<dbReference type="PANTHER" id="PTHR42886:SF83">
    <property type="entry name" value="PROTEIN ABHD8"/>
    <property type="match status" value="1"/>
</dbReference>
<dbReference type="PANTHER" id="PTHR42886">
    <property type="entry name" value="RE40534P-RELATED"/>
    <property type="match status" value="1"/>
</dbReference>
<dbReference type="Pfam" id="PF00561">
    <property type="entry name" value="Abhydrolase_1"/>
    <property type="match status" value="1"/>
</dbReference>
<dbReference type="PRINTS" id="PR00111">
    <property type="entry name" value="ABHYDROLASE"/>
</dbReference>
<dbReference type="PRINTS" id="PR00412">
    <property type="entry name" value="EPOXHYDRLASE"/>
</dbReference>
<dbReference type="SUPFAM" id="SSF53474">
    <property type="entry name" value="alpha/beta-Hydrolases"/>
    <property type="match status" value="1"/>
</dbReference>
<comment type="function">
    <text evidence="2">Negatively regulates NLRP3-driven inflammation. Promotes NLRP3 degradation through the chaperone-mediated autophagy (CMA) pathway, hence attenuating inflammasome activation and IL1B secretion. Acts by recruiting palmitoyltransferase ZDHHC12 to NLRP3, facilitating NLRP3 palmitoylation and subsequent degradation.</text>
</comment>
<comment type="subunit">
    <text evidence="2">Interacts with NLRP3 (via NACHT and LLR domains); this interaction is enhanced in the presence of NLRP3 inflammasome inducers, such as ATP, nigericin, silica, or alum. Interacts with ZDHHC12.</text>
</comment>
<comment type="subcellular location">
    <subcellularLocation>
        <location evidence="2">Cytoplasm</location>
    </subcellularLocation>
</comment>
<comment type="similarity">
    <text evidence="5">Belongs to the AB hydrolase superfamily.</text>
</comment>
<evidence type="ECO:0000250" key="1"/>
<evidence type="ECO:0000250" key="2">
    <source>
        <dbReference type="UniProtKB" id="Q96I13"/>
    </source>
</evidence>
<evidence type="ECO:0000255" key="3"/>
<evidence type="ECO:0000256" key="4">
    <source>
        <dbReference type="SAM" id="MobiDB-lite"/>
    </source>
</evidence>
<evidence type="ECO:0000305" key="5"/>
<protein>
    <recommendedName>
        <fullName evidence="5">Protein ABHD8</fullName>
        <ecNumber>3.-.-.-</ecNumber>
    </recommendedName>
    <alternativeName>
        <fullName evidence="5">Alpha/beta hydrolase domain-containing protein 8</fullName>
        <shortName evidence="2">Abhydrolase domain-containing protein 8</shortName>
    </alternativeName>
</protein>
<feature type="chain" id="PRO_0000281381" description="Protein ABHD8">
    <location>
        <begin position="1"/>
        <end position="432"/>
    </location>
</feature>
<feature type="domain" description="AB hydrolase-1" evidence="3">
    <location>
        <begin position="170"/>
        <end position="272"/>
    </location>
</feature>
<feature type="region of interest" description="Disordered" evidence="4">
    <location>
        <begin position="47"/>
        <end position="69"/>
    </location>
</feature>
<feature type="region of interest" description="Disordered" evidence="4">
    <location>
        <begin position="121"/>
        <end position="149"/>
    </location>
</feature>
<feature type="compositionally biased region" description="Pro residues" evidence="4">
    <location>
        <begin position="52"/>
        <end position="61"/>
    </location>
</feature>
<feature type="compositionally biased region" description="Basic residues" evidence="4">
    <location>
        <begin position="139"/>
        <end position="149"/>
    </location>
</feature>
<feature type="active site" description="Charge relay system" evidence="1">
    <location>
        <position position="245"/>
    </location>
</feature>
<feature type="active site" description="Charge relay system" evidence="1">
    <location>
        <position position="363"/>
    </location>
</feature>
<feature type="active site" description="Charge relay system" evidence="1">
    <location>
        <position position="391"/>
    </location>
</feature>
<sequence>MLTGVTDGIFCCLLGAPPNAVGPLESVESSDGYTFVEVKPGRVLRVKHAGPAPAPTPPPPLSDAAQGDQSGLVRCQRRITVYRNGRLLVENLGRAPRADLLHGQNGSGEPPAALEVELADPAGSDGRSVPGSAGSGSGGRRRRARRPKRTIHIDCEKRITSCKGAQADVVLFFIHGVGGSLAIWKEQLDFFVRLGYEVVAPDLAGHGASSAPQVAAAYTFYALAEDMRAIFKRYAKKRNVLIGHSYGVSFCTFLAHEYPDLVHKVIMINGGGPTALEPSLCSVFNMPTCVLHCLSPCLAWSFLKAGFARQGAKEKQLLKEGNAFNVSSFVLRAMMSGQYWPEGDEVYHAELTVPVLLVHGMHDKFVPVEEDQRMAEILLLAFLKLIDEGSHMVMLECPETVNTLLHEFLLWEPEPSPKALPEPLPAPPEEKK</sequence>
<accession>Q17QP1</accession>
<name>ABHD8_BOVIN</name>
<gene>
    <name evidence="2" type="primary">ABHD8</name>
</gene>
<keyword id="KW-0963">Cytoplasm</keyword>
<keyword id="KW-0378">Hydrolase</keyword>
<keyword id="KW-0395">Inflammatory response</keyword>
<keyword id="KW-1185">Reference proteome</keyword>
<reference key="1">
    <citation type="submission" date="2006-06" db="EMBL/GenBank/DDBJ databases">
        <authorList>
            <consortium name="NIH - Mammalian Gene Collection (MGC) project"/>
        </authorList>
    </citation>
    <scope>NUCLEOTIDE SEQUENCE [LARGE SCALE MRNA]</scope>
    <source>
        <strain>Hereford</strain>
        <tissue>Thalamus</tissue>
    </source>
</reference>